<feature type="signal peptide" evidence="1">
    <location>
        <begin position="1"/>
        <end position="26"/>
    </location>
</feature>
<feature type="chain" id="PRO_0000414431" description="Lipid A acyltransferase PagP">
    <location>
        <begin position="27"/>
        <end position="187"/>
    </location>
</feature>
<feature type="active site" evidence="1">
    <location>
        <position position="59"/>
    </location>
</feature>
<feature type="active site" evidence="1">
    <location>
        <position position="102"/>
    </location>
</feature>
<feature type="active site" evidence="1">
    <location>
        <position position="103"/>
    </location>
</feature>
<feature type="site" description="Role in lipopolysaccharide recognition" evidence="1">
    <location>
        <position position="68"/>
    </location>
</feature>
<feature type="site" description="Role in the phospholipid gating" evidence="1">
    <location>
        <position position="173"/>
    </location>
</feature>
<accession>A8AJI1</accession>
<gene>
    <name evidence="1" type="primary">pagP</name>
    <name type="ordered locus">CKO_02535</name>
</gene>
<organism>
    <name type="scientific">Citrobacter koseri (strain ATCC BAA-895 / CDC 4225-83 / SGSC4696)</name>
    <dbReference type="NCBI Taxonomy" id="290338"/>
    <lineage>
        <taxon>Bacteria</taxon>
        <taxon>Pseudomonadati</taxon>
        <taxon>Pseudomonadota</taxon>
        <taxon>Gammaproteobacteria</taxon>
        <taxon>Enterobacterales</taxon>
        <taxon>Enterobacteriaceae</taxon>
        <taxon>Citrobacter</taxon>
    </lineage>
</organism>
<proteinExistence type="inferred from homology"/>
<keyword id="KW-0012">Acyltransferase</keyword>
<keyword id="KW-0998">Cell outer membrane</keyword>
<keyword id="KW-0472">Membrane</keyword>
<keyword id="KW-1185">Reference proteome</keyword>
<keyword id="KW-0732">Signal</keyword>
<keyword id="KW-0808">Transferase</keyword>
<protein>
    <recommendedName>
        <fullName evidence="1">Lipid A acyltransferase PagP</fullName>
        <ecNumber evidence="1">2.3.1.251</ecNumber>
    </recommendedName>
    <alternativeName>
        <fullName evidence="1">Lipid A acylation protein</fullName>
    </alternativeName>
</protein>
<sequence>MIVAKKYFLVLSFLFVQFALLPQAFSADKGWFDTLKDNVSETWQQPEHYDLYVPAITWHARFAYDKEKTDRYNERPWGAGFGQSRWDDKGNWHGLYIMAFKDSFNKWEPIGGYGWEKTWRPLADENFHMGLGFTAGATARDNWKYIPVPVLLPLASIGYGPATFQMTYIPGTYNNGNVYFAWMRFQF</sequence>
<reference key="1">
    <citation type="submission" date="2007-08" db="EMBL/GenBank/DDBJ databases">
        <authorList>
            <consortium name="The Citrobacter koseri Genome Sequencing Project"/>
            <person name="McClelland M."/>
            <person name="Sanderson E.K."/>
            <person name="Porwollik S."/>
            <person name="Spieth J."/>
            <person name="Clifton W.S."/>
            <person name="Latreille P."/>
            <person name="Courtney L."/>
            <person name="Wang C."/>
            <person name="Pepin K."/>
            <person name="Bhonagiri V."/>
            <person name="Nash W."/>
            <person name="Johnson M."/>
            <person name="Thiruvilangam P."/>
            <person name="Wilson R."/>
        </authorList>
    </citation>
    <scope>NUCLEOTIDE SEQUENCE [LARGE SCALE GENOMIC DNA]</scope>
    <source>
        <strain>ATCC BAA-895 / CDC 4225-83 / SGSC4696</strain>
    </source>
</reference>
<evidence type="ECO:0000255" key="1">
    <source>
        <dbReference type="HAMAP-Rule" id="MF_00837"/>
    </source>
</evidence>
<dbReference type="EC" id="2.3.1.251" evidence="1"/>
<dbReference type="EMBL" id="CP000822">
    <property type="protein sequence ID" value="ABV13644.1"/>
    <property type="molecule type" value="Genomic_DNA"/>
</dbReference>
<dbReference type="RefSeq" id="WP_012133363.1">
    <property type="nucleotide sequence ID" value="NC_009792.1"/>
</dbReference>
<dbReference type="SMR" id="A8AJI1"/>
<dbReference type="STRING" id="290338.CKO_02535"/>
<dbReference type="GeneID" id="45136411"/>
<dbReference type="KEGG" id="cko:CKO_02535"/>
<dbReference type="HOGENOM" id="CLU_104099_0_0_6"/>
<dbReference type="OrthoDB" id="9156803at2"/>
<dbReference type="Proteomes" id="UP000008148">
    <property type="component" value="Chromosome"/>
</dbReference>
<dbReference type="GO" id="GO:0009279">
    <property type="term" value="C:cell outer membrane"/>
    <property type="evidence" value="ECO:0007669"/>
    <property type="project" value="UniProtKB-SubCell"/>
</dbReference>
<dbReference type="GO" id="GO:0016746">
    <property type="term" value="F:acyltransferase activity"/>
    <property type="evidence" value="ECO:0007669"/>
    <property type="project" value="UniProtKB-UniRule"/>
</dbReference>
<dbReference type="GO" id="GO:0009245">
    <property type="term" value="P:lipid A biosynthetic process"/>
    <property type="evidence" value="ECO:0007669"/>
    <property type="project" value="UniProtKB-UniRule"/>
</dbReference>
<dbReference type="FunFam" id="2.40.160.20:FF:000002">
    <property type="entry name" value="Lipid A palmitoyltransferase PagP"/>
    <property type="match status" value="1"/>
</dbReference>
<dbReference type="Gene3D" id="2.40.160.20">
    <property type="match status" value="1"/>
</dbReference>
<dbReference type="HAMAP" id="MF_00837">
    <property type="entry name" value="PagP_transferase"/>
    <property type="match status" value="1"/>
</dbReference>
<dbReference type="InterPro" id="IPR009746">
    <property type="entry name" value="LipidA_acyl_PagP"/>
</dbReference>
<dbReference type="InterPro" id="IPR011250">
    <property type="entry name" value="OMP/PagP_b-brl"/>
</dbReference>
<dbReference type="NCBIfam" id="NF008271">
    <property type="entry name" value="PRK11045.1"/>
    <property type="match status" value="1"/>
</dbReference>
<dbReference type="Pfam" id="PF07017">
    <property type="entry name" value="PagP"/>
    <property type="match status" value="1"/>
</dbReference>
<dbReference type="SUPFAM" id="SSF56925">
    <property type="entry name" value="OMPA-like"/>
    <property type="match status" value="1"/>
</dbReference>
<name>PAGP_CITK8</name>
<comment type="function">
    <text evidence="1">Transfers a fatty acid residue from the sn-1 position of a phospholipid to the N-linked hydroxyfatty acid chain on the proximal unit of lipid A or its precursors.</text>
</comment>
<comment type="catalytic activity">
    <reaction evidence="1">
        <text>a lipid A + a 1,2-diacyl-sn-glycero-3-phosphocholine = a hepta-acyl lipid A + a 2-acyl-sn-glycero-3-phosphocholine</text>
        <dbReference type="Rhea" id="RHEA:74275"/>
        <dbReference type="ChEBI" id="CHEBI:57643"/>
        <dbReference type="ChEBI" id="CHEBI:57875"/>
        <dbReference type="ChEBI" id="CHEBI:193141"/>
        <dbReference type="ChEBI" id="CHEBI:193142"/>
        <dbReference type="EC" id="2.3.1.251"/>
    </reaction>
</comment>
<comment type="catalytic activity">
    <reaction evidence="1">
        <text>a lipid IVA + a 1,2-diacyl-sn-glycero-3-phosphocholine = a lipid IVB + a 2-acyl-sn-glycero-3-phosphocholine</text>
        <dbReference type="Rhea" id="RHEA:74279"/>
        <dbReference type="ChEBI" id="CHEBI:57643"/>
        <dbReference type="ChEBI" id="CHEBI:57875"/>
        <dbReference type="ChEBI" id="CHEBI:176425"/>
        <dbReference type="ChEBI" id="CHEBI:193143"/>
        <dbReference type="EC" id="2.3.1.251"/>
    </reaction>
</comment>
<comment type="catalytic activity">
    <reaction evidence="1">
        <text>a lipid IIA + a 1,2-diacyl-sn-glycero-3-phosphocholine = a lipid IIB + a 2-acyl-sn-glycero-3-phosphocholine</text>
        <dbReference type="Rhea" id="RHEA:74283"/>
        <dbReference type="ChEBI" id="CHEBI:57643"/>
        <dbReference type="ChEBI" id="CHEBI:57875"/>
        <dbReference type="ChEBI" id="CHEBI:193144"/>
        <dbReference type="ChEBI" id="CHEBI:193145"/>
        <dbReference type="EC" id="2.3.1.251"/>
    </reaction>
</comment>
<comment type="subunit">
    <text evidence="1">Homodimer.</text>
</comment>
<comment type="subcellular location">
    <subcellularLocation>
        <location evidence="1">Cell outer membrane</location>
    </subcellularLocation>
</comment>
<comment type="similarity">
    <text evidence="1">Belongs to the lipid A palmitoyltransferase family.</text>
</comment>